<name>US9_HHV2H</name>
<protein>
    <recommendedName>
        <fullName>Envelope protein US9</fullName>
    </recommendedName>
    <alternativeName>
        <fullName>10 kDa protein</fullName>
    </alternativeName>
</protein>
<gene>
    <name type="ORF">US9</name>
</gene>
<accession>P89477</accession>
<proteinExistence type="inferred from homology"/>
<keyword id="KW-1032">Host cell membrane</keyword>
<keyword id="KW-1038">Host endoplasmic reticulum</keyword>
<keyword id="KW-1040">Host Golgi apparatus</keyword>
<keyword id="KW-1043">Host membrane</keyword>
<keyword id="KW-0472">Membrane</keyword>
<keyword id="KW-0597">Phosphoprotein</keyword>
<keyword id="KW-1185">Reference proteome</keyword>
<keyword id="KW-0735">Signal-anchor</keyword>
<keyword id="KW-0812">Transmembrane</keyword>
<keyword id="KW-1133">Transmembrane helix</keyword>
<keyword id="KW-0261">Viral envelope protein</keyword>
<keyword id="KW-0946">Virion</keyword>
<organismHost>
    <name type="scientific">Homo sapiens</name>
    <name type="common">Human</name>
    <dbReference type="NCBI Taxonomy" id="9606"/>
</organismHost>
<dbReference type="EMBL" id="Z86099">
    <property type="protein sequence ID" value="CAB06717.1"/>
    <property type="molecule type" value="Genomic_DNA"/>
</dbReference>
<dbReference type="RefSeq" id="YP_009137222.1">
    <property type="nucleotide sequence ID" value="NC_001798.2"/>
</dbReference>
<dbReference type="SMR" id="P89477"/>
<dbReference type="DNASU" id="24271460"/>
<dbReference type="GeneID" id="24271460"/>
<dbReference type="KEGG" id="vg:24271460"/>
<dbReference type="Proteomes" id="UP000001874">
    <property type="component" value="Segment"/>
</dbReference>
<dbReference type="GO" id="GO:0043657">
    <property type="term" value="C:host cell"/>
    <property type="evidence" value="ECO:0007669"/>
    <property type="project" value="GOC"/>
</dbReference>
<dbReference type="GO" id="GO:0044178">
    <property type="term" value="C:host cell Golgi membrane"/>
    <property type="evidence" value="ECO:0007669"/>
    <property type="project" value="UniProtKB-SubCell"/>
</dbReference>
<dbReference type="GO" id="GO:0020002">
    <property type="term" value="C:host cell plasma membrane"/>
    <property type="evidence" value="ECO:0007669"/>
    <property type="project" value="UniProtKB-SubCell"/>
</dbReference>
<dbReference type="GO" id="GO:0044171">
    <property type="term" value="C:host cell smooth endoplasmic reticulum membrane"/>
    <property type="evidence" value="ECO:0007669"/>
    <property type="project" value="UniProtKB-SubCell"/>
</dbReference>
<dbReference type="GO" id="GO:0016020">
    <property type="term" value="C:membrane"/>
    <property type="evidence" value="ECO:0007669"/>
    <property type="project" value="UniProtKB-KW"/>
</dbReference>
<dbReference type="GO" id="GO:0019031">
    <property type="term" value="C:viral envelope"/>
    <property type="evidence" value="ECO:0007669"/>
    <property type="project" value="UniProtKB-KW"/>
</dbReference>
<dbReference type="GO" id="GO:0055036">
    <property type="term" value="C:virion membrane"/>
    <property type="evidence" value="ECO:0007669"/>
    <property type="project" value="UniProtKB-SubCell"/>
</dbReference>
<dbReference type="GO" id="GO:0075733">
    <property type="term" value="P:intracellular transport of virus"/>
    <property type="evidence" value="ECO:0007669"/>
    <property type="project" value="InterPro"/>
</dbReference>
<dbReference type="InterPro" id="IPR009278">
    <property type="entry name" value="Herpes_US9"/>
</dbReference>
<dbReference type="Pfam" id="PF06072">
    <property type="entry name" value="Herpes_US9"/>
    <property type="match status" value="1"/>
</dbReference>
<reference key="1">
    <citation type="journal article" date="1987" name="J. Gen. Virol.">
        <title>DNA sequence and genetic content of the HindIII l region in the short unique component of the herpes simplex virus type 2 genome: identification of the gene encoding glycoprotein G, and evolutionary comparisons.</title>
        <authorList>
            <person name="McGeoch D.J."/>
            <person name="Moss H.W.M."/>
            <person name="McNab D."/>
            <person name="Frame M.C."/>
        </authorList>
    </citation>
    <scope>NUCLEOTIDE SEQUENCE [GENOMIC DNA]</scope>
</reference>
<reference key="2">
    <citation type="journal article" date="1998" name="J. Virol.">
        <title>The genome sequence of herpes simplex virus type 2.</title>
        <authorList>
            <person name="Dolan A."/>
            <person name="Jamieson F.E."/>
            <person name="Cunningham C."/>
            <person name="Barnett B.C."/>
            <person name="McGeoch D.J."/>
        </authorList>
    </citation>
    <scope>NUCLEOTIDE SEQUENCE [LARGE SCALE GENOMIC DNA]</scope>
</reference>
<evidence type="ECO:0000250" key="1"/>
<evidence type="ECO:0000255" key="2"/>
<evidence type="ECO:0000256" key="3">
    <source>
        <dbReference type="SAM" id="MobiDB-lite"/>
    </source>
</evidence>
<evidence type="ECO:0000305" key="4"/>
<organism>
    <name type="scientific">Human herpesvirus 2 (strain HG52)</name>
    <name type="common">HHV-2</name>
    <name type="synonym">Human herpes simplex virus 2</name>
    <dbReference type="NCBI Taxonomy" id="10315"/>
    <lineage>
        <taxon>Viruses</taxon>
        <taxon>Duplodnaviria</taxon>
        <taxon>Heunggongvirae</taxon>
        <taxon>Peploviricota</taxon>
        <taxon>Herviviricetes</taxon>
        <taxon>Herpesvirales</taxon>
        <taxon>Orthoherpesviridae</taxon>
        <taxon>Alphaherpesvirinae</taxon>
        <taxon>Simplexvirus</taxon>
        <taxon>Simplexvirus humanalpha2</taxon>
        <taxon>Human herpesvirus 2</taxon>
    </lineage>
</organism>
<feature type="chain" id="PRO_0000385484" description="Envelope protein US9">
    <location>
        <begin position="1"/>
        <end position="89"/>
    </location>
</feature>
<feature type="topological domain" description="Intravirion" evidence="1">
    <location>
        <begin position="1"/>
        <end position="66"/>
    </location>
</feature>
<feature type="transmembrane region" description="Helical; Signal-anchor for type II membrane protein" evidence="1">
    <location>
        <begin position="67"/>
        <end position="87"/>
    </location>
</feature>
<feature type="topological domain" description="Virion surface" evidence="1">
    <location>
        <begin position="88"/>
        <end position="89"/>
    </location>
</feature>
<feature type="region of interest" description="Disordered" evidence="3">
    <location>
        <begin position="1"/>
        <end position="21"/>
    </location>
</feature>
<feature type="region of interest" description="Acidic">
    <location>
        <begin position="29"/>
        <end position="38"/>
    </location>
</feature>
<feature type="short sequence motif" description="Internalization motif" evidence="2">
    <location>
        <begin position="20"/>
        <end position="23"/>
    </location>
</feature>
<feature type="compositionally biased region" description="Basic and acidic residues" evidence="3">
    <location>
        <begin position="1"/>
        <end position="10"/>
    </location>
</feature>
<feature type="modified residue" description="Phosphoserine; by host CK2" evidence="2">
    <location>
        <position position="33"/>
    </location>
</feature>
<feature type="modified residue" description="Phosphoserine; by host CK2" evidence="2">
    <location>
        <position position="35"/>
    </location>
</feature>
<comment type="function">
    <text>Essential for the anterograde spread of the infection throughout the host nervous system. Together with the gE/gI heterodimer, US9 is involved in the sorting and transport of viral structural components toward axon tips.</text>
</comment>
<comment type="subcellular location">
    <subcellularLocation>
        <location evidence="1">Virion membrane</location>
        <topology evidence="1">Single-pass type II membrane protein</topology>
    </subcellularLocation>
    <subcellularLocation>
        <location evidence="1">Host Golgi apparatus membrane</location>
        <topology evidence="1">Single-pass type II membrane protein</topology>
    </subcellularLocation>
    <subcellularLocation>
        <location evidence="1">Host smooth endoplasmic reticulum membrane</location>
        <topology evidence="1">Single-pass type II membrane protein</topology>
    </subcellularLocation>
    <subcellularLocation>
        <location evidence="4">Host cell membrane</location>
        <topology evidence="4">Single-pass type II membrane protein</topology>
    </subcellularLocation>
    <text>During virion morphogenesis, this protein probably accumulates in the endosomes and trans-Golgi where secondary envelopment occurs. It is probably transported to the cell surface from where it is endocytosed and directed to the trans-Golgi network (TGN), maybe through an interaction with PACS-1 sorting protein.</text>
</comment>
<comment type="PTM">
    <text evidence="4">Phosphorylated on serines within the acidic cluster, possibly by host CK2. Phosphorylation determines whether endocytosed viral US9 traffics to the trans-Golgi network or recycles to the cell membrane.</text>
</comment>
<comment type="similarity">
    <text evidence="4">Belongs to the alphaherpesvirinae envelope protein US9 family.</text>
</comment>
<sequence>MTSRPADQDSVRSSASVPLYPAASPVPAEAYYSESEDEAANDFLVRMGRQQSVLRRRRRRTRCVGLVIACLVVALLSGGFGALLVWLLR</sequence>